<reference key="1">
    <citation type="journal article" date="2005" name="Science">
        <title>The transcriptional landscape of the mammalian genome.</title>
        <authorList>
            <person name="Carninci P."/>
            <person name="Kasukawa T."/>
            <person name="Katayama S."/>
            <person name="Gough J."/>
            <person name="Frith M.C."/>
            <person name="Maeda N."/>
            <person name="Oyama R."/>
            <person name="Ravasi T."/>
            <person name="Lenhard B."/>
            <person name="Wells C."/>
            <person name="Kodzius R."/>
            <person name="Shimokawa K."/>
            <person name="Bajic V.B."/>
            <person name="Brenner S.E."/>
            <person name="Batalov S."/>
            <person name="Forrest A.R."/>
            <person name="Zavolan M."/>
            <person name="Davis M.J."/>
            <person name="Wilming L.G."/>
            <person name="Aidinis V."/>
            <person name="Allen J.E."/>
            <person name="Ambesi-Impiombato A."/>
            <person name="Apweiler R."/>
            <person name="Aturaliya R.N."/>
            <person name="Bailey T.L."/>
            <person name="Bansal M."/>
            <person name="Baxter L."/>
            <person name="Beisel K.W."/>
            <person name="Bersano T."/>
            <person name="Bono H."/>
            <person name="Chalk A.M."/>
            <person name="Chiu K.P."/>
            <person name="Choudhary V."/>
            <person name="Christoffels A."/>
            <person name="Clutterbuck D.R."/>
            <person name="Crowe M.L."/>
            <person name="Dalla E."/>
            <person name="Dalrymple B.P."/>
            <person name="de Bono B."/>
            <person name="Della Gatta G."/>
            <person name="di Bernardo D."/>
            <person name="Down T."/>
            <person name="Engstrom P."/>
            <person name="Fagiolini M."/>
            <person name="Faulkner G."/>
            <person name="Fletcher C.F."/>
            <person name="Fukushima T."/>
            <person name="Furuno M."/>
            <person name="Futaki S."/>
            <person name="Gariboldi M."/>
            <person name="Georgii-Hemming P."/>
            <person name="Gingeras T.R."/>
            <person name="Gojobori T."/>
            <person name="Green R.E."/>
            <person name="Gustincich S."/>
            <person name="Harbers M."/>
            <person name="Hayashi Y."/>
            <person name="Hensch T.K."/>
            <person name="Hirokawa N."/>
            <person name="Hill D."/>
            <person name="Huminiecki L."/>
            <person name="Iacono M."/>
            <person name="Ikeo K."/>
            <person name="Iwama A."/>
            <person name="Ishikawa T."/>
            <person name="Jakt M."/>
            <person name="Kanapin A."/>
            <person name="Katoh M."/>
            <person name="Kawasawa Y."/>
            <person name="Kelso J."/>
            <person name="Kitamura H."/>
            <person name="Kitano H."/>
            <person name="Kollias G."/>
            <person name="Krishnan S.P."/>
            <person name="Kruger A."/>
            <person name="Kummerfeld S.K."/>
            <person name="Kurochkin I.V."/>
            <person name="Lareau L.F."/>
            <person name="Lazarevic D."/>
            <person name="Lipovich L."/>
            <person name="Liu J."/>
            <person name="Liuni S."/>
            <person name="McWilliam S."/>
            <person name="Madan Babu M."/>
            <person name="Madera M."/>
            <person name="Marchionni L."/>
            <person name="Matsuda H."/>
            <person name="Matsuzawa S."/>
            <person name="Miki H."/>
            <person name="Mignone F."/>
            <person name="Miyake S."/>
            <person name="Morris K."/>
            <person name="Mottagui-Tabar S."/>
            <person name="Mulder N."/>
            <person name="Nakano N."/>
            <person name="Nakauchi H."/>
            <person name="Ng P."/>
            <person name="Nilsson R."/>
            <person name="Nishiguchi S."/>
            <person name="Nishikawa S."/>
            <person name="Nori F."/>
            <person name="Ohara O."/>
            <person name="Okazaki Y."/>
            <person name="Orlando V."/>
            <person name="Pang K.C."/>
            <person name="Pavan W.J."/>
            <person name="Pavesi G."/>
            <person name="Pesole G."/>
            <person name="Petrovsky N."/>
            <person name="Piazza S."/>
            <person name="Reed J."/>
            <person name="Reid J.F."/>
            <person name="Ring B.Z."/>
            <person name="Ringwald M."/>
            <person name="Rost B."/>
            <person name="Ruan Y."/>
            <person name="Salzberg S.L."/>
            <person name="Sandelin A."/>
            <person name="Schneider C."/>
            <person name="Schoenbach C."/>
            <person name="Sekiguchi K."/>
            <person name="Semple C.A."/>
            <person name="Seno S."/>
            <person name="Sessa L."/>
            <person name="Sheng Y."/>
            <person name="Shibata Y."/>
            <person name="Shimada H."/>
            <person name="Shimada K."/>
            <person name="Silva D."/>
            <person name="Sinclair B."/>
            <person name="Sperling S."/>
            <person name="Stupka E."/>
            <person name="Sugiura K."/>
            <person name="Sultana R."/>
            <person name="Takenaka Y."/>
            <person name="Taki K."/>
            <person name="Tammoja K."/>
            <person name="Tan S.L."/>
            <person name="Tang S."/>
            <person name="Taylor M.S."/>
            <person name="Tegner J."/>
            <person name="Teichmann S.A."/>
            <person name="Ueda H.R."/>
            <person name="van Nimwegen E."/>
            <person name="Verardo R."/>
            <person name="Wei C.L."/>
            <person name="Yagi K."/>
            <person name="Yamanishi H."/>
            <person name="Zabarovsky E."/>
            <person name="Zhu S."/>
            <person name="Zimmer A."/>
            <person name="Hide W."/>
            <person name="Bult C."/>
            <person name="Grimmond S.M."/>
            <person name="Teasdale R.D."/>
            <person name="Liu E.T."/>
            <person name="Brusic V."/>
            <person name="Quackenbush J."/>
            <person name="Wahlestedt C."/>
            <person name="Mattick J.S."/>
            <person name="Hume D.A."/>
            <person name="Kai C."/>
            <person name="Sasaki D."/>
            <person name="Tomaru Y."/>
            <person name="Fukuda S."/>
            <person name="Kanamori-Katayama M."/>
            <person name="Suzuki M."/>
            <person name="Aoki J."/>
            <person name="Arakawa T."/>
            <person name="Iida J."/>
            <person name="Imamura K."/>
            <person name="Itoh M."/>
            <person name="Kato T."/>
            <person name="Kawaji H."/>
            <person name="Kawagashira N."/>
            <person name="Kawashima T."/>
            <person name="Kojima M."/>
            <person name="Kondo S."/>
            <person name="Konno H."/>
            <person name="Nakano K."/>
            <person name="Ninomiya N."/>
            <person name="Nishio T."/>
            <person name="Okada M."/>
            <person name="Plessy C."/>
            <person name="Shibata K."/>
            <person name="Shiraki T."/>
            <person name="Suzuki S."/>
            <person name="Tagami M."/>
            <person name="Waki K."/>
            <person name="Watahiki A."/>
            <person name="Okamura-Oho Y."/>
            <person name="Suzuki H."/>
            <person name="Kawai J."/>
            <person name="Hayashizaki Y."/>
        </authorList>
    </citation>
    <scope>NUCLEOTIDE SEQUENCE [LARGE SCALE MRNA]</scope>
    <source>
        <strain>C57BL/6J</strain>
        <strain>NOD</strain>
        <tissue>Aorta</tissue>
        <tissue>Brain</tissue>
        <tissue>Brain cortex</tissue>
        <tissue>Cerebellum</tissue>
        <tissue>Testis</tissue>
        <tissue>Vein</tissue>
    </source>
</reference>
<reference key="2">
    <citation type="journal article" date="2004" name="Genome Res.">
        <title>The status, quality, and expansion of the NIH full-length cDNA project: the Mammalian Gene Collection (MGC).</title>
        <authorList>
            <consortium name="The MGC Project Team"/>
        </authorList>
    </citation>
    <scope>NUCLEOTIDE SEQUENCE [LARGE SCALE MRNA]</scope>
    <source>
        <strain>Czech II</strain>
        <tissue>Mammary gland</tissue>
    </source>
</reference>
<reference key="3">
    <citation type="journal article" date="2012" name="Vet. Pathol.">
        <title>Congenital hydrocephalus in genetically engineered mice.</title>
        <authorList>
            <person name="Vogel P."/>
            <person name="Read R.W."/>
            <person name="Hansen G.M."/>
            <person name="Payne B.J."/>
            <person name="Small D."/>
            <person name="Sands A.T."/>
            <person name="Zambrowicz B.P."/>
        </authorList>
    </citation>
    <scope>DISRUPTION PHENOTYPE</scope>
</reference>
<feature type="chain" id="PRO_0000262998" description="Protein O-mannose kinase">
    <location>
        <begin position="1"/>
        <end position="349"/>
    </location>
</feature>
<feature type="topological domain" description="Cytoplasmic" evidence="2">
    <location>
        <begin position="1"/>
        <end position="19"/>
    </location>
</feature>
<feature type="transmembrane region" description="Helical; Signal-anchor for type II membrane protein" evidence="2">
    <location>
        <begin position="20"/>
        <end position="42"/>
    </location>
</feature>
<feature type="topological domain" description="Lumenal" evidence="2">
    <location>
        <begin position="43"/>
        <end position="349"/>
    </location>
</feature>
<feature type="domain" description="Protein kinase" evidence="3">
    <location>
        <begin position="80"/>
        <end position="349"/>
    </location>
</feature>
<feature type="glycosylation site" description="N-linked (GlcNAc...) asparagine" evidence="2">
    <location>
        <position position="66"/>
    </location>
</feature>
<feature type="glycosylation site" description="N-linked (GlcNAc...) asparagine" evidence="2">
    <location>
        <position position="164"/>
    </location>
</feature>
<feature type="glycosylation site" description="N-linked (GlcNAc...) asparagine" evidence="2">
    <location>
        <position position="219"/>
    </location>
</feature>
<feature type="sequence conflict" description="In Ref. 1; BAC29393." evidence="5" ref="1">
    <original>H</original>
    <variation>Y</variation>
    <location>
        <position position="5"/>
    </location>
</feature>
<feature type="sequence conflict" description="In Ref. 1; BAE42167." evidence="5" ref="1">
    <original>N</original>
    <variation>D</variation>
    <location>
        <position position="158"/>
    </location>
</feature>
<feature type="sequence conflict" description="In Ref. 2; AAH27296." evidence="5" ref="2">
    <original>V</original>
    <variation>I</variation>
    <location>
        <position position="239"/>
    </location>
</feature>
<feature type="sequence conflict" description="In Ref. 1; BAE42167." evidence="5" ref="1">
    <original>N</original>
    <variation>T</variation>
    <location>
        <position position="276"/>
    </location>
</feature>
<feature type="sequence conflict" description="In Ref. 2; AAH27296." evidence="5" ref="2">
    <original>E</original>
    <variation>K</variation>
    <location>
        <position position="319"/>
    </location>
</feature>
<feature type="sequence conflict" description="In Ref. 1; BAE36062." evidence="5" ref="1">
    <original>H</original>
    <variation>Q</variation>
    <location>
        <position position="335"/>
    </location>
</feature>
<feature type="helix" evidence="7">
    <location>
        <begin position="73"/>
        <end position="79"/>
    </location>
</feature>
<feature type="strand" evidence="7">
    <location>
        <begin position="81"/>
        <end position="88"/>
    </location>
</feature>
<feature type="strand" evidence="7">
    <location>
        <begin position="90"/>
        <end position="99"/>
    </location>
</feature>
<feature type="strand" evidence="7">
    <location>
        <begin position="102"/>
        <end position="110"/>
    </location>
</feature>
<feature type="helix" evidence="6">
    <location>
        <begin position="112"/>
        <end position="114"/>
    </location>
</feature>
<feature type="helix" evidence="7">
    <location>
        <begin position="115"/>
        <end position="127"/>
    </location>
</feature>
<feature type="strand" evidence="7">
    <location>
        <begin position="136"/>
        <end position="140"/>
    </location>
</feature>
<feature type="turn" evidence="7">
    <location>
        <begin position="141"/>
        <end position="144"/>
    </location>
</feature>
<feature type="strand" evidence="7">
    <location>
        <begin position="145"/>
        <end position="149"/>
    </location>
</feature>
<feature type="helix" evidence="7">
    <location>
        <begin position="156"/>
        <end position="158"/>
    </location>
</feature>
<feature type="helix" evidence="7">
    <location>
        <begin position="159"/>
        <end position="162"/>
    </location>
</feature>
<feature type="helix" evidence="7">
    <location>
        <begin position="174"/>
        <end position="192"/>
    </location>
</feature>
<feature type="strand" evidence="7">
    <location>
        <begin position="197"/>
        <end position="199"/>
    </location>
</feature>
<feature type="helix" evidence="7">
    <location>
        <begin position="207"/>
        <end position="212"/>
    </location>
</feature>
<feature type="strand" evidence="7">
    <location>
        <begin position="214"/>
        <end position="216"/>
    </location>
</feature>
<feature type="strand" evidence="7">
    <location>
        <begin position="222"/>
        <end position="224"/>
    </location>
</feature>
<feature type="strand" evidence="7">
    <location>
        <begin position="250"/>
        <end position="253"/>
    </location>
</feature>
<feature type="helix" evidence="7">
    <location>
        <begin position="255"/>
        <end position="257"/>
    </location>
</feature>
<feature type="helix" evidence="7">
    <location>
        <begin position="269"/>
        <end position="271"/>
    </location>
</feature>
<feature type="helix" evidence="7">
    <location>
        <begin position="278"/>
        <end position="292"/>
    </location>
</feature>
<feature type="helix" evidence="7">
    <location>
        <begin position="298"/>
        <end position="312"/>
    </location>
</feature>
<feature type="helix" evidence="7">
    <location>
        <begin position="317"/>
        <end position="319"/>
    </location>
</feature>
<feature type="helix" evidence="7">
    <location>
        <begin position="323"/>
        <end position="336"/>
    </location>
</feature>
<comment type="function">
    <text evidence="1">Protein O-mannose kinase that specifically mediates phosphorylation at the 6-position of an O-mannose of the trisaccharide (N-acetylgalactosamine (GalNAc)-beta-1,3-N-acetylglucosamine (GlcNAc)-beta-1,4-mannose) to generate phosphorylated O-mannosyl trisaccharide (N-acetylgalactosamine-beta-1,3-N-acetylglucosamine-beta-1,4-(phosphate-6-)mannose). Phosphorylated O-mannosyl trisaccharide is a carbohydrate structure present in alpha-dystroglycan (DAG1), which is required for binding laminin G-like domain-containing extracellular proteins with high affinity. Only shows kinase activity when the GalNAc-beta-3-GlcNAc-beta-terminus is linked to the 4-position of O-mannose, suggesting that this disaccharide serves as the substrate recognition motif (By similarity).</text>
</comment>
<comment type="catalytic activity">
    <reaction>
        <text>3-O-[beta-D-GalNAc-(1-&gt;3)-beta-D-GlcNAc-(1-&gt;4)-alpha-D-Man]-L-Thr-[protein] + ATP = 3-O-[beta-D-GalNAc-(1-&gt;3)-beta-D-GlcNAc-(1-&gt;4)-(O-6-P-alpha-D-Man)]-Thr-[protein] + ADP + H(+)</text>
        <dbReference type="Rhea" id="RHEA:52616"/>
        <dbReference type="Rhea" id="RHEA-COMP:13308"/>
        <dbReference type="Rhea" id="RHEA-COMP:13309"/>
        <dbReference type="ChEBI" id="CHEBI:15378"/>
        <dbReference type="ChEBI" id="CHEBI:30616"/>
        <dbReference type="ChEBI" id="CHEBI:136709"/>
        <dbReference type="ChEBI" id="CHEBI:136710"/>
        <dbReference type="ChEBI" id="CHEBI:456216"/>
        <dbReference type="EC" id="2.7.1.183"/>
    </reaction>
</comment>
<comment type="subcellular location">
    <subcellularLocation>
        <location evidence="1">Endoplasmic reticulum membrane</location>
        <topology evidence="1">Single-pass type II membrane protein</topology>
    </subcellularLocation>
</comment>
<comment type="disruption phenotype">
    <text evidence="4">Hydrocephaly: mutant mice exhibit dome-shaped heads of varying severity. Surviving mutant mice display numerous behavioral abnormalities: tremors, and inverted screen testing show 5 of 8 falling off, suggesting impaired motor strength. Impaired sensorimotor gating/attention is suggested by decreased prepulse inhibition, and impaired learning/memory is detected with trace aversive conditioning testing. In testing nociception, decreased paw flinching is observed during both formalin phases, suggesting decreased sensitivity to acute and tonic pain. Histologically, the most obvious changes are hydrocephalus in 4 of 5 and cerebellar dysplasia in all 5. Abnormalities in neuronal migration are evident in other parts of the brain; in the cerebral cortex, there is disorganization of cortical neuron layers, and the dentate gyrus of the hippocampus has a scalloped appearance. The cerebellar dysplasia is characterized by multifocal disorganization of cerebellar cortical neurons, with clusters of external granular neurons being scattered on the surface of the cerebellum and multifocally within the molecular layer of the cerebellum. In some regions, there is incomplete separation of cerebellar folia, and Purkinje cell. neurons were occasionally found in the molecular layer.</text>
</comment>
<comment type="similarity">
    <text evidence="3">Belongs to the protein kinase superfamily. Ser/Thr protein kinase family. STKL subfamily.</text>
</comment>
<comment type="caution">
    <text evidence="5">Although related to the Ser/Thr protein kinase family, has no protein kinase activity and acts as a mannose kinase instead.</text>
</comment>
<protein>
    <recommendedName>
        <fullName>Protein O-mannose kinase</fullName>
        <shortName>POMK</shortName>
        <ecNumber>2.7.1.183</ecNumber>
    </recommendedName>
    <alternativeName>
        <fullName>Protein kinase-like protein SgK196</fullName>
    </alternativeName>
    <alternativeName>
        <fullName>Sugen kinase 196</fullName>
    </alternativeName>
</protein>
<accession>Q3TUA9</accession>
<accession>Q3TBZ0</accession>
<accession>Q8BZ83</accession>
<accession>Q8R2S2</accession>
<accession>Q9D5G4</accession>
<proteinExistence type="evidence at protein level"/>
<organism>
    <name type="scientific">Mus musculus</name>
    <name type="common">Mouse</name>
    <dbReference type="NCBI Taxonomy" id="10090"/>
    <lineage>
        <taxon>Eukaryota</taxon>
        <taxon>Metazoa</taxon>
        <taxon>Chordata</taxon>
        <taxon>Craniata</taxon>
        <taxon>Vertebrata</taxon>
        <taxon>Euteleostomi</taxon>
        <taxon>Mammalia</taxon>
        <taxon>Eutheria</taxon>
        <taxon>Euarchontoglires</taxon>
        <taxon>Glires</taxon>
        <taxon>Rodentia</taxon>
        <taxon>Myomorpha</taxon>
        <taxon>Muroidea</taxon>
        <taxon>Muridae</taxon>
        <taxon>Murinae</taxon>
        <taxon>Mus</taxon>
        <taxon>Mus</taxon>
    </lineage>
</organism>
<dbReference type="EC" id="2.7.1.183"/>
<dbReference type="EMBL" id="AK036348">
    <property type="protein sequence ID" value="BAC29393.1"/>
    <property type="molecule type" value="mRNA"/>
</dbReference>
<dbReference type="EMBL" id="AK015374">
    <property type="protein sequence ID" value="BAB29817.1"/>
    <property type="molecule type" value="mRNA"/>
</dbReference>
<dbReference type="EMBL" id="AK032677">
    <property type="protein sequence ID" value="BAC27984.1"/>
    <property type="molecule type" value="mRNA"/>
</dbReference>
<dbReference type="EMBL" id="AK043620">
    <property type="protein sequence ID" value="BAC31598.1"/>
    <property type="molecule type" value="mRNA"/>
</dbReference>
<dbReference type="EMBL" id="AK138952">
    <property type="protein sequence ID" value="BAE23832.1"/>
    <property type="molecule type" value="mRNA"/>
</dbReference>
<dbReference type="EMBL" id="AK160873">
    <property type="protein sequence ID" value="BAE36062.1"/>
    <property type="molecule type" value="mRNA"/>
</dbReference>
<dbReference type="EMBL" id="AK170994">
    <property type="protein sequence ID" value="BAE42167.1"/>
    <property type="molecule type" value="mRNA"/>
</dbReference>
<dbReference type="EMBL" id="BC027296">
    <property type="protein sequence ID" value="AAH27296.1"/>
    <property type="molecule type" value="mRNA"/>
</dbReference>
<dbReference type="CCDS" id="CCDS22204.1"/>
<dbReference type="RefSeq" id="NP_083313.1">
    <property type="nucleotide sequence ID" value="NM_029037.4"/>
</dbReference>
<dbReference type="PDB" id="5GZ8">
    <property type="method" value="X-ray"/>
    <property type="resolution" value="2.50 A"/>
    <property type="chains" value="A=45-349"/>
</dbReference>
<dbReference type="PDB" id="5GZ9">
    <property type="method" value="X-ray"/>
    <property type="resolution" value="2.40 A"/>
    <property type="chains" value="A=45-349"/>
</dbReference>
<dbReference type="PDBsum" id="5GZ8"/>
<dbReference type="PDBsum" id="5GZ9"/>
<dbReference type="SMR" id="Q3TUA9"/>
<dbReference type="BioGRID" id="216915">
    <property type="interactions" value="1"/>
</dbReference>
<dbReference type="FunCoup" id="Q3TUA9">
    <property type="interactions" value="759"/>
</dbReference>
<dbReference type="STRING" id="10090.ENSMUSP00000053802"/>
<dbReference type="GlyCosmos" id="Q3TUA9">
    <property type="glycosylation" value="3 sites, No reported glycans"/>
</dbReference>
<dbReference type="GlyGen" id="Q3TUA9">
    <property type="glycosylation" value="3 sites"/>
</dbReference>
<dbReference type="iPTMnet" id="Q3TUA9"/>
<dbReference type="PhosphoSitePlus" id="Q3TUA9"/>
<dbReference type="PaxDb" id="10090-ENSMUSP00000053802"/>
<dbReference type="PeptideAtlas" id="Q3TUA9"/>
<dbReference type="ProteomicsDB" id="256976"/>
<dbReference type="Antibodypedia" id="24208">
    <property type="antibodies" value="259 antibodies from 22 providers"/>
</dbReference>
<dbReference type="DNASU" id="74653"/>
<dbReference type="Ensembl" id="ENSMUST00000061850.5">
    <property type="protein sequence ID" value="ENSMUSP00000053802.4"/>
    <property type="gene ID" value="ENSMUSG00000037251.6"/>
</dbReference>
<dbReference type="GeneID" id="74653"/>
<dbReference type="KEGG" id="mmu:74653"/>
<dbReference type="UCSC" id="uc009lhh.1">
    <property type="organism name" value="mouse"/>
</dbReference>
<dbReference type="AGR" id="MGI:1921903"/>
<dbReference type="CTD" id="84197"/>
<dbReference type="MGI" id="MGI:1921903">
    <property type="gene designation" value="Pomk"/>
</dbReference>
<dbReference type="VEuPathDB" id="HostDB:ENSMUSG00000037251"/>
<dbReference type="eggNOG" id="ENOG502QQQV">
    <property type="taxonomic scope" value="Eukaryota"/>
</dbReference>
<dbReference type="GeneTree" id="ENSGT00390000004945"/>
<dbReference type="HOGENOM" id="CLU_067581_0_0_1"/>
<dbReference type="InParanoid" id="Q3TUA9"/>
<dbReference type="OMA" id="NTWHRRL"/>
<dbReference type="OrthoDB" id="4062651at2759"/>
<dbReference type="PhylomeDB" id="Q3TUA9"/>
<dbReference type="TreeFam" id="TF328472"/>
<dbReference type="BRENDA" id="2.7.1.183">
    <property type="organism ID" value="3474"/>
</dbReference>
<dbReference type="Reactome" id="R-MMU-5173105">
    <property type="pathway name" value="O-linked glycosylation"/>
</dbReference>
<dbReference type="SABIO-RK" id="Q3TUA9"/>
<dbReference type="BioGRID-ORCS" id="74653">
    <property type="hits" value="0 hits in 80 CRISPR screens"/>
</dbReference>
<dbReference type="ChiTaRS" id="Pomk">
    <property type="organism name" value="mouse"/>
</dbReference>
<dbReference type="PRO" id="PR:Q3TUA9"/>
<dbReference type="Proteomes" id="UP000000589">
    <property type="component" value="Chromosome 8"/>
</dbReference>
<dbReference type="RNAct" id="Q3TUA9">
    <property type="molecule type" value="protein"/>
</dbReference>
<dbReference type="Bgee" id="ENSMUSG00000037251">
    <property type="expression patterns" value="Expressed in dorsal pancreas and 257 other cell types or tissues"/>
</dbReference>
<dbReference type="GO" id="GO:0005789">
    <property type="term" value="C:endoplasmic reticulum membrane"/>
    <property type="evidence" value="ECO:0000314"/>
    <property type="project" value="MGI"/>
</dbReference>
<dbReference type="GO" id="GO:0005524">
    <property type="term" value="F:ATP binding"/>
    <property type="evidence" value="ECO:0007669"/>
    <property type="project" value="UniProtKB-KW"/>
</dbReference>
<dbReference type="GO" id="GO:0019200">
    <property type="term" value="F:carbohydrate kinase activity"/>
    <property type="evidence" value="ECO:0000314"/>
    <property type="project" value="MGI"/>
</dbReference>
<dbReference type="GO" id="GO:0016773">
    <property type="term" value="F:phosphotransferase activity, alcohol group as acceptor"/>
    <property type="evidence" value="ECO:0000250"/>
    <property type="project" value="UniProtKB"/>
</dbReference>
<dbReference type="GO" id="GO:0004672">
    <property type="term" value="F:protein kinase activity"/>
    <property type="evidence" value="ECO:0007669"/>
    <property type="project" value="InterPro"/>
</dbReference>
<dbReference type="GO" id="GO:0007420">
    <property type="term" value="P:brain development"/>
    <property type="evidence" value="ECO:0000315"/>
    <property type="project" value="MGI"/>
</dbReference>
<dbReference type="GO" id="GO:0046835">
    <property type="term" value="P:carbohydrate phosphorylation"/>
    <property type="evidence" value="ECO:0000250"/>
    <property type="project" value="UniProtKB"/>
</dbReference>
<dbReference type="GO" id="GO:0007611">
    <property type="term" value="P:learning or memory"/>
    <property type="evidence" value="ECO:0000315"/>
    <property type="project" value="MGI"/>
</dbReference>
<dbReference type="GO" id="GO:0050905">
    <property type="term" value="P:neuromuscular process"/>
    <property type="evidence" value="ECO:0000315"/>
    <property type="project" value="MGI"/>
</dbReference>
<dbReference type="GO" id="GO:0006493">
    <property type="term" value="P:protein O-linked glycosylation"/>
    <property type="evidence" value="ECO:0000314"/>
    <property type="project" value="MGI"/>
</dbReference>
<dbReference type="GO" id="GO:0019233">
    <property type="term" value="P:sensory perception of pain"/>
    <property type="evidence" value="ECO:0000315"/>
    <property type="project" value="MGI"/>
</dbReference>
<dbReference type="FunFam" id="1.10.510.10:FF:000464">
    <property type="entry name" value="Protein O-mannose kinase"/>
    <property type="match status" value="1"/>
</dbReference>
<dbReference type="Gene3D" id="1.10.510.10">
    <property type="entry name" value="Transferase(Phosphotransferase) domain 1"/>
    <property type="match status" value="1"/>
</dbReference>
<dbReference type="InterPro" id="IPR011009">
    <property type="entry name" value="Kinase-like_dom_sf"/>
</dbReference>
<dbReference type="InterPro" id="IPR039318">
    <property type="entry name" value="POMK"/>
</dbReference>
<dbReference type="InterPro" id="IPR000719">
    <property type="entry name" value="Prot_kinase_dom"/>
</dbReference>
<dbReference type="InterPro" id="IPR001245">
    <property type="entry name" value="Ser-Thr/Tyr_kinase_cat_dom"/>
</dbReference>
<dbReference type="PANTHER" id="PTHR22618">
    <property type="entry name" value="PROTEIN O-MANNOSE KINASE"/>
    <property type="match status" value="1"/>
</dbReference>
<dbReference type="PANTHER" id="PTHR22618:SF2">
    <property type="entry name" value="PROTEIN O-MANNOSE KINASE"/>
    <property type="match status" value="1"/>
</dbReference>
<dbReference type="Pfam" id="PF07714">
    <property type="entry name" value="PK_Tyr_Ser-Thr"/>
    <property type="match status" value="1"/>
</dbReference>
<dbReference type="SUPFAM" id="SSF56112">
    <property type="entry name" value="Protein kinase-like (PK-like)"/>
    <property type="match status" value="1"/>
</dbReference>
<dbReference type="PROSITE" id="PS50011">
    <property type="entry name" value="PROTEIN_KINASE_DOM"/>
    <property type="match status" value="1"/>
</dbReference>
<gene>
    <name type="primary">Pomk</name>
    <name type="synonym">Sgk196</name>
</gene>
<sequence>MGQQHGTRNGLTHRELPRGVGLLLAMALMNVALYLCLDQLFISPGRSTADSRRCPPGYFRMGRMRNCSRWLSCEELRTEVRQLKRVGEGAVKRVFLSEWKEHKVALSRLTRLEMKEDFLHGLQMLKSLQSEHVVTLVGYCEEDGTILTEYHPLGSLSNLEETLNLSKYQDVNTWQHRLQLAMEYVSIINYLHHSPLGTRVMCDSNDLPKTLSQYLLTSNFSIVANDLDALPLVDHDSGVLIKCGHRELHGDFVAPEQLWPYGEDTPFQDDLMPSYNEKVDIWKIPDVSSFLLGHVEGSDMVRFHLFDIHKACKSQIPAERPTAQNVLDAYQRVFHSLRDTVMSQTKEML</sequence>
<name>SG196_MOUSE</name>
<evidence type="ECO:0000250" key="1"/>
<evidence type="ECO:0000255" key="2"/>
<evidence type="ECO:0000255" key="3">
    <source>
        <dbReference type="PROSITE-ProRule" id="PRU00159"/>
    </source>
</evidence>
<evidence type="ECO:0000269" key="4">
    <source>
    </source>
</evidence>
<evidence type="ECO:0000305" key="5"/>
<evidence type="ECO:0007829" key="6">
    <source>
        <dbReference type="PDB" id="5GZ8"/>
    </source>
</evidence>
<evidence type="ECO:0007829" key="7">
    <source>
        <dbReference type="PDB" id="5GZ9"/>
    </source>
</evidence>
<keyword id="KW-0002">3D-structure</keyword>
<keyword id="KW-0067">ATP-binding</keyword>
<keyword id="KW-0256">Endoplasmic reticulum</keyword>
<keyword id="KW-0325">Glycoprotein</keyword>
<keyword id="KW-0418">Kinase</keyword>
<keyword id="KW-0472">Membrane</keyword>
<keyword id="KW-0547">Nucleotide-binding</keyword>
<keyword id="KW-1185">Reference proteome</keyword>
<keyword id="KW-0735">Signal-anchor</keyword>
<keyword id="KW-0808">Transferase</keyword>
<keyword id="KW-0812">Transmembrane</keyword>
<keyword id="KW-1133">Transmembrane helix</keyword>